<dbReference type="EC" id="1.15.1.1" evidence="2"/>
<dbReference type="EMBL" id="BX571856">
    <property type="protein sequence ID" value="CAG40625.1"/>
    <property type="molecule type" value="Genomic_DNA"/>
</dbReference>
<dbReference type="RefSeq" id="WP_000863556.1">
    <property type="nucleotide sequence ID" value="NC_002952.2"/>
</dbReference>
<dbReference type="SMR" id="Q6GGE6"/>
<dbReference type="KEGG" id="sar:SAR1630"/>
<dbReference type="HOGENOM" id="CLU_031625_0_1_9"/>
<dbReference type="Proteomes" id="UP000000596">
    <property type="component" value="Chromosome"/>
</dbReference>
<dbReference type="GO" id="GO:0005737">
    <property type="term" value="C:cytoplasm"/>
    <property type="evidence" value="ECO:0007669"/>
    <property type="project" value="TreeGrafter"/>
</dbReference>
<dbReference type="GO" id="GO:0046872">
    <property type="term" value="F:metal ion binding"/>
    <property type="evidence" value="ECO:0007669"/>
    <property type="project" value="UniProtKB-KW"/>
</dbReference>
<dbReference type="GO" id="GO:0004784">
    <property type="term" value="F:superoxide dismutase activity"/>
    <property type="evidence" value="ECO:0007669"/>
    <property type="project" value="UniProtKB-EC"/>
</dbReference>
<dbReference type="FunFam" id="1.10.287.990:FF:000001">
    <property type="entry name" value="Superoxide dismutase"/>
    <property type="match status" value="1"/>
</dbReference>
<dbReference type="FunFam" id="3.55.40.20:FF:000001">
    <property type="entry name" value="Superoxide dismutase"/>
    <property type="match status" value="1"/>
</dbReference>
<dbReference type="Gene3D" id="1.10.287.990">
    <property type="entry name" value="Fe,Mn superoxide dismutase (SOD) domain"/>
    <property type="match status" value="1"/>
</dbReference>
<dbReference type="Gene3D" id="3.55.40.20">
    <property type="entry name" value="Iron/manganese superoxide dismutase, C-terminal domain"/>
    <property type="match status" value="1"/>
</dbReference>
<dbReference type="InterPro" id="IPR001189">
    <property type="entry name" value="Mn/Fe_SOD"/>
</dbReference>
<dbReference type="InterPro" id="IPR019833">
    <property type="entry name" value="Mn/Fe_SOD_BS"/>
</dbReference>
<dbReference type="InterPro" id="IPR019832">
    <property type="entry name" value="Mn/Fe_SOD_C"/>
</dbReference>
<dbReference type="InterPro" id="IPR019831">
    <property type="entry name" value="Mn/Fe_SOD_N"/>
</dbReference>
<dbReference type="InterPro" id="IPR036324">
    <property type="entry name" value="Mn/Fe_SOD_N_sf"/>
</dbReference>
<dbReference type="InterPro" id="IPR036314">
    <property type="entry name" value="SOD_C_sf"/>
</dbReference>
<dbReference type="PANTHER" id="PTHR43595">
    <property type="entry name" value="37S RIBOSOMAL PROTEIN S26, MITOCHONDRIAL"/>
    <property type="match status" value="1"/>
</dbReference>
<dbReference type="PANTHER" id="PTHR43595:SF2">
    <property type="entry name" value="SMALL RIBOSOMAL SUBUNIT PROTEIN MS42"/>
    <property type="match status" value="1"/>
</dbReference>
<dbReference type="Pfam" id="PF02777">
    <property type="entry name" value="Sod_Fe_C"/>
    <property type="match status" value="1"/>
</dbReference>
<dbReference type="Pfam" id="PF00081">
    <property type="entry name" value="Sod_Fe_N"/>
    <property type="match status" value="1"/>
</dbReference>
<dbReference type="PIRSF" id="PIRSF000349">
    <property type="entry name" value="SODismutase"/>
    <property type="match status" value="1"/>
</dbReference>
<dbReference type="PRINTS" id="PR01703">
    <property type="entry name" value="MNSODISMTASE"/>
</dbReference>
<dbReference type="SUPFAM" id="SSF54719">
    <property type="entry name" value="Fe,Mn superoxide dismutase (SOD), C-terminal domain"/>
    <property type="match status" value="1"/>
</dbReference>
<dbReference type="SUPFAM" id="SSF46609">
    <property type="entry name" value="Fe,Mn superoxide dismutase (SOD), N-terminal domain"/>
    <property type="match status" value="1"/>
</dbReference>
<dbReference type="PROSITE" id="PS00088">
    <property type="entry name" value="SOD_MN"/>
    <property type="match status" value="1"/>
</dbReference>
<feature type="chain" id="PRO_0000160072" description="Superoxide dismutase [Mn/Fe] 1">
    <location>
        <begin position="1"/>
        <end position="199"/>
    </location>
</feature>
<feature type="binding site" evidence="2">
    <location>
        <position position="27"/>
    </location>
    <ligand>
        <name>Fe(3+)</name>
        <dbReference type="ChEBI" id="CHEBI:29034"/>
    </ligand>
</feature>
<feature type="binding site" evidence="2">
    <location>
        <position position="27"/>
    </location>
    <ligand>
        <name>Mn(2+)</name>
        <dbReference type="ChEBI" id="CHEBI:29035"/>
    </ligand>
</feature>
<feature type="binding site" evidence="2">
    <location>
        <position position="81"/>
    </location>
    <ligand>
        <name>Fe(3+)</name>
        <dbReference type="ChEBI" id="CHEBI:29034"/>
    </ligand>
</feature>
<feature type="binding site" evidence="2">
    <location>
        <position position="81"/>
    </location>
    <ligand>
        <name>Mn(2+)</name>
        <dbReference type="ChEBI" id="CHEBI:29035"/>
    </ligand>
</feature>
<feature type="binding site" evidence="2">
    <location>
        <position position="161"/>
    </location>
    <ligand>
        <name>Fe(3+)</name>
        <dbReference type="ChEBI" id="CHEBI:29034"/>
    </ligand>
</feature>
<feature type="binding site" evidence="2">
    <location>
        <position position="161"/>
    </location>
    <ligand>
        <name>Mn(2+)</name>
        <dbReference type="ChEBI" id="CHEBI:29035"/>
    </ligand>
</feature>
<feature type="binding site" evidence="2">
    <location>
        <position position="165"/>
    </location>
    <ligand>
        <name>Fe(3+)</name>
        <dbReference type="ChEBI" id="CHEBI:29034"/>
    </ligand>
</feature>
<feature type="binding site" evidence="2">
    <location>
        <position position="165"/>
    </location>
    <ligand>
        <name>Mn(2+)</name>
        <dbReference type="ChEBI" id="CHEBI:29035"/>
    </ligand>
</feature>
<evidence type="ECO:0000250" key="1"/>
<evidence type="ECO:0000250" key="2">
    <source>
        <dbReference type="UniProtKB" id="P80293"/>
    </source>
</evidence>
<evidence type="ECO:0000305" key="3"/>
<protein>
    <recommendedName>
        <fullName>Superoxide dismutase [Mn/Fe] 1</fullName>
        <ecNumber evidence="2">1.15.1.1</ecNumber>
    </recommendedName>
</protein>
<sequence length="199" mass="22711">MAFELPKLPYAFDALEPHFDKETMEIHHDRHHNTYVTKLNAAVEGTDLESKSIEEIVANLDSVPANIQTAVRNNGGGHLNHSLFWELLSPNSEEKGTVVEKIKEQWGSLEEFKKEFADKAAARFGSGWAWLVVNNGQLEIVTTPNQDNPLTEGKTPILGLDVWEHAYYLKYQNKRPDYIGAFWNVVNWEKVDELYNATK</sequence>
<reference key="1">
    <citation type="journal article" date="2004" name="Proc. Natl. Acad. Sci. U.S.A.">
        <title>Complete genomes of two clinical Staphylococcus aureus strains: evidence for the rapid evolution of virulence and drug resistance.</title>
        <authorList>
            <person name="Holden M.T.G."/>
            <person name="Feil E.J."/>
            <person name="Lindsay J.A."/>
            <person name="Peacock S.J."/>
            <person name="Day N.P.J."/>
            <person name="Enright M.C."/>
            <person name="Foster T.J."/>
            <person name="Moore C.E."/>
            <person name="Hurst L."/>
            <person name="Atkin R."/>
            <person name="Barron A."/>
            <person name="Bason N."/>
            <person name="Bentley S.D."/>
            <person name="Chillingworth C."/>
            <person name="Chillingworth T."/>
            <person name="Churcher C."/>
            <person name="Clark L."/>
            <person name="Corton C."/>
            <person name="Cronin A."/>
            <person name="Doggett J."/>
            <person name="Dowd L."/>
            <person name="Feltwell T."/>
            <person name="Hance Z."/>
            <person name="Harris B."/>
            <person name="Hauser H."/>
            <person name="Holroyd S."/>
            <person name="Jagels K."/>
            <person name="James K.D."/>
            <person name="Lennard N."/>
            <person name="Line A."/>
            <person name="Mayes R."/>
            <person name="Moule S."/>
            <person name="Mungall K."/>
            <person name="Ormond D."/>
            <person name="Quail M.A."/>
            <person name="Rabbinowitsch E."/>
            <person name="Rutherford K.M."/>
            <person name="Sanders M."/>
            <person name="Sharp S."/>
            <person name="Simmonds M."/>
            <person name="Stevens K."/>
            <person name="Whitehead S."/>
            <person name="Barrell B.G."/>
            <person name="Spratt B.G."/>
            <person name="Parkhill J."/>
        </authorList>
    </citation>
    <scope>NUCLEOTIDE SEQUENCE [LARGE SCALE GENOMIC DNA]</scope>
    <source>
        <strain>MRSA252</strain>
    </source>
</reference>
<keyword id="KW-0408">Iron</keyword>
<keyword id="KW-0464">Manganese</keyword>
<keyword id="KW-0479">Metal-binding</keyword>
<keyword id="KW-0560">Oxidoreductase</keyword>
<keyword id="KW-0346">Stress response</keyword>
<proteinExistence type="inferred from homology"/>
<name>SODM1_STAAR</name>
<accession>Q6GGE6</accession>
<gene>
    <name type="primary">sodA</name>
    <name type="ordered locus">SAR1630</name>
</gene>
<organism>
    <name type="scientific">Staphylococcus aureus (strain MRSA252)</name>
    <dbReference type="NCBI Taxonomy" id="282458"/>
    <lineage>
        <taxon>Bacteria</taxon>
        <taxon>Bacillati</taxon>
        <taxon>Bacillota</taxon>
        <taxon>Bacilli</taxon>
        <taxon>Bacillales</taxon>
        <taxon>Staphylococcaceae</taxon>
        <taxon>Staphylococcus</taxon>
    </lineage>
</organism>
<comment type="function">
    <text evidence="2">Destroys superoxide anion radicals which are normally produced within the cells and which are toxic to biological systems. Catalyzes the dismutation of superoxide anion radicals into O2 and H2O2 by successive reduction and oxidation of the transition metal ion at the active site.</text>
</comment>
<comment type="catalytic activity">
    <reaction evidence="2">
        <text>2 superoxide + 2 H(+) = H2O2 + O2</text>
        <dbReference type="Rhea" id="RHEA:20696"/>
        <dbReference type="ChEBI" id="CHEBI:15378"/>
        <dbReference type="ChEBI" id="CHEBI:15379"/>
        <dbReference type="ChEBI" id="CHEBI:16240"/>
        <dbReference type="ChEBI" id="CHEBI:18421"/>
        <dbReference type="EC" id="1.15.1.1"/>
    </reaction>
    <physiologicalReaction direction="left-to-right" evidence="2">
        <dbReference type="Rhea" id="RHEA:20697"/>
    </physiologicalReaction>
</comment>
<comment type="cofactor">
    <cofactor evidence="2">
        <name>Mn(2+)</name>
        <dbReference type="ChEBI" id="CHEBI:29035"/>
    </cofactor>
    <cofactor evidence="2">
        <name>Fe(3+)</name>
        <dbReference type="ChEBI" id="CHEBI:29034"/>
    </cofactor>
    <text evidence="2">Binds 1 Mn(2+) or Fe(3+) ion per subunit.</text>
</comment>
<comment type="subunit">
    <text evidence="1">Homodimer. Can also form a heterodimer with SodM (By similarity).</text>
</comment>
<comment type="similarity">
    <text evidence="3">Belongs to the iron/manganese superoxide dismutase family.</text>
</comment>